<comment type="similarity">
    <text evidence="1">Belongs to the UPF0134 family.</text>
</comment>
<proteinExistence type="inferred from homology"/>
<gene>
    <name type="ordered locus">MPN_675</name>
    <name type="ORF">K05_orf101a</name>
    <name type="ORF">MP167</name>
</gene>
<organism>
    <name type="scientific">Mycoplasma pneumoniae (strain ATCC 29342 / M129 / Subtype 1)</name>
    <name type="common">Mycoplasmoides pneumoniae</name>
    <dbReference type="NCBI Taxonomy" id="272634"/>
    <lineage>
        <taxon>Bacteria</taxon>
        <taxon>Bacillati</taxon>
        <taxon>Mycoplasmatota</taxon>
        <taxon>Mycoplasmoidales</taxon>
        <taxon>Mycoplasmoidaceae</taxon>
        <taxon>Mycoplasmoides</taxon>
    </lineage>
</organism>
<reference key="1">
    <citation type="journal article" date="1996" name="Nucleic Acids Res.">
        <title>Complete sequence analysis of the genome of the bacterium Mycoplasma pneumoniae.</title>
        <authorList>
            <person name="Himmelreich R."/>
            <person name="Hilbert H."/>
            <person name="Plagens H."/>
            <person name="Pirkl E."/>
            <person name="Li B.-C."/>
            <person name="Herrmann R."/>
        </authorList>
    </citation>
    <scope>NUCLEOTIDE SEQUENCE [LARGE SCALE GENOMIC DNA]</scope>
    <source>
        <strain>ATCC 29342 / M129 / Subtype 1</strain>
    </source>
</reference>
<sequence>MGFYGNLNHMEKGKSGYVTHKQLDKKLEVFKQELLVEFDQRYVTKAEFKEFQIEVREGFRIQGEAMNARMDRFESLVLKSLESINNTLIDFGKRIDKLESK</sequence>
<keyword id="KW-1185">Reference proteome</keyword>
<protein>
    <recommendedName>
        <fullName>UPF0134 protein MPN_675</fullName>
    </recommendedName>
</protein>
<dbReference type="EMBL" id="U00089">
    <property type="protein sequence ID" value="AAB95815.1"/>
    <property type="molecule type" value="Genomic_DNA"/>
</dbReference>
<dbReference type="PIR" id="S73493">
    <property type="entry name" value="S73493"/>
</dbReference>
<dbReference type="RefSeq" id="NP_110364.1">
    <property type="nucleotide sequence ID" value="NC_000912.1"/>
</dbReference>
<dbReference type="SMR" id="P75117"/>
<dbReference type="STRING" id="272634.MPN_675"/>
<dbReference type="EnsemblBacteria" id="AAB95815">
    <property type="protein sequence ID" value="AAB95815"/>
    <property type="gene ID" value="MPN_675"/>
</dbReference>
<dbReference type="KEGG" id="mpn:MPN_675"/>
<dbReference type="PATRIC" id="fig|272634.6.peg.743"/>
<dbReference type="HOGENOM" id="CLU_089620_0_0_14"/>
<dbReference type="BioCyc" id="MPNE272634:G1GJ3-1080-MONOMER"/>
<dbReference type="Proteomes" id="UP000000808">
    <property type="component" value="Chromosome"/>
</dbReference>
<dbReference type="Gene3D" id="6.10.250.40">
    <property type="match status" value="1"/>
</dbReference>
<dbReference type="SUPFAM" id="SSF144266">
    <property type="entry name" value="MPN010-like"/>
    <property type="match status" value="1"/>
</dbReference>
<evidence type="ECO:0000305" key="1"/>
<accession>P75117</accession>
<name>Y675_MYCPN</name>
<feature type="chain" id="PRO_0000221614" description="UPF0134 protein MPN_675">
    <location>
        <begin position="1"/>
        <end position="101"/>
    </location>
</feature>